<feature type="chain" id="PRO_0000317257" description="Transmembrane protein 196">
    <location>
        <begin position="1"/>
        <end position="179"/>
    </location>
</feature>
<feature type="transmembrane region" description="Helical" evidence="3">
    <location>
        <begin position="11"/>
        <end position="31"/>
    </location>
</feature>
<feature type="transmembrane region" description="Helical" evidence="3">
    <location>
        <begin position="44"/>
        <end position="61"/>
    </location>
</feature>
<feature type="transmembrane region" description="Helical" evidence="3">
    <location>
        <begin position="67"/>
        <end position="87"/>
    </location>
</feature>
<feature type="transmembrane region" description="Helical" evidence="3">
    <location>
        <begin position="100"/>
        <end position="120"/>
    </location>
</feature>
<dbReference type="EMBL" id="CR858336">
    <property type="protein sequence ID" value="CAH90572.1"/>
    <property type="molecule type" value="mRNA"/>
</dbReference>
<dbReference type="RefSeq" id="NP_001125305.1">
    <property type="nucleotide sequence ID" value="NM_001131833.1"/>
</dbReference>
<dbReference type="SMR" id="Q5RCD5"/>
<dbReference type="FunCoup" id="Q5RCD5">
    <property type="interactions" value="14"/>
</dbReference>
<dbReference type="GeneID" id="100172204"/>
<dbReference type="KEGG" id="pon:100172204"/>
<dbReference type="CTD" id="256130"/>
<dbReference type="eggNOG" id="ENOG502RXKV">
    <property type="taxonomic scope" value="Eukaryota"/>
</dbReference>
<dbReference type="InParanoid" id="Q5RCD5"/>
<dbReference type="OrthoDB" id="10016951at2759"/>
<dbReference type="Proteomes" id="UP000001595">
    <property type="component" value="Unplaced"/>
</dbReference>
<dbReference type="GO" id="GO:0005737">
    <property type="term" value="C:cytoplasm"/>
    <property type="evidence" value="ECO:0000250"/>
    <property type="project" value="UniProtKB"/>
</dbReference>
<dbReference type="GO" id="GO:0016020">
    <property type="term" value="C:membrane"/>
    <property type="evidence" value="ECO:0007669"/>
    <property type="project" value="UniProtKB-SubCell"/>
</dbReference>
<dbReference type="GO" id="GO:0090090">
    <property type="term" value="P:negative regulation of canonical Wnt signaling pathway"/>
    <property type="evidence" value="ECO:0000250"/>
    <property type="project" value="UniProtKB"/>
</dbReference>
<dbReference type="GO" id="GO:0030308">
    <property type="term" value="P:negative regulation of cell growth"/>
    <property type="evidence" value="ECO:0000250"/>
    <property type="project" value="UniProtKB"/>
</dbReference>
<dbReference type="GO" id="GO:0030336">
    <property type="term" value="P:negative regulation of cell migration"/>
    <property type="evidence" value="ECO:0000250"/>
    <property type="project" value="UniProtKB"/>
</dbReference>
<dbReference type="GO" id="GO:0008285">
    <property type="term" value="P:negative regulation of cell population proliferation"/>
    <property type="evidence" value="ECO:0000250"/>
    <property type="project" value="UniProtKB"/>
</dbReference>
<dbReference type="GO" id="GO:0043065">
    <property type="term" value="P:positive regulation of apoptotic process"/>
    <property type="evidence" value="ECO:0000250"/>
    <property type="project" value="UniProtKB"/>
</dbReference>
<dbReference type="InterPro" id="IPR037661">
    <property type="entry name" value="TMEM196"/>
</dbReference>
<dbReference type="PANTHER" id="PTHR28681">
    <property type="entry name" value="TRANSMEMBRANE PROTEIN 196"/>
    <property type="match status" value="1"/>
</dbReference>
<dbReference type="PANTHER" id="PTHR28681:SF1">
    <property type="entry name" value="TRANSMEMBRANE PROTEIN 196"/>
    <property type="match status" value="1"/>
</dbReference>
<gene>
    <name type="primary">TMEM196</name>
</gene>
<protein>
    <recommendedName>
        <fullName>Transmembrane protein 196</fullName>
    </recommendedName>
</protein>
<keyword id="KW-0963">Cytoplasm</keyword>
<keyword id="KW-0472">Membrane</keyword>
<keyword id="KW-1185">Reference proteome</keyword>
<keyword id="KW-0812">Transmembrane</keyword>
<keyword id="KW-1133">Transmembrane helix</keyword>
<keyword id="KW-0043">Tumor suppressor</keyword>
<sequence length="179" mass="19231">MCTSGQIIGSLLVLSVLEIGLGVSSVAVGAVSFSLALREHKPQLGDSSPFLLCGICGILCAKKKSGLVMILFSACCICGLIGGILNFQFLRAVTKKTSSLYPLHLASMSLACIGIGGCTLSSWLTCRLASYEQRRMFSEREHSLHHSHEMAEKRLRAIEITDLPSCPVVPPTPELPTRK</sequence>
<proteinExistence type="evidence at transcript level"/>
<comment type="function">
    <text evidence="1 2">Acts as a tumor suppressor in lung cancer. Inhibits tumor cell growth by inhibiting cell proliferation and migration and promoting cell apoptosis. Inhibits metastasis of lung cancer by suppressing beta-catenin expression in the Wnt/beta-catenin signaling pathway.</text>
</comment>
<comment type="subcellular location">
    <subcellularLocation>
        <location evidence="2">Cytoplasm</location>
    </subcellularLocation>
    <subcellularLocation>
        <location evidence="3">Membrane</location>
        <topology evidence="3">Multi-pass membrane protein</topology>
    </subcellularLocation>
</comment>
<evidence type="ECO:0000250" key="1">
    <source>
        <dbReference type="UniProtKB" id="D3YWQ9"/>
    </source>
</evidence>
<evidence type="ECO:0000250" key="2">
    <source>
        <dbReference type="UniProtKB" id="Q5HYL7"/>
    </source>
</evidence>
<evidence type="ECO:0000255" key="3"/>
<name>TM196_PONAB</name>
<organism>
    <name type="scientific">Pongo abelii</name>
    <name type="common">Sumatran orangutan</name>
    <name type="synonym">Pongo pygmaeus abelii</name>
    <dbReference type="NCBI Taxonomy" id="9601"/>
    <lineage>
        <taxon>Eukaryota</taxon>
        <taxon>Metazoa</taxon>
        <taxon>Chordata</taxon>
        <taxon>Craniata</taxon>
        <taxon>Vertebrata</taxon>
        <taxon>Euteleostomi</taxon>
        <taxon>Mammalia</taxon>
        <taxon>Eutheria</taxon>
        <taxon>Euarchontoglires</taxon>
        <taxon>Primates</taxon>
        <taxon>Haplorrhini</taxon>
        <taxon>Catarrhini</taxon>
        <taxon>Hominidae</taxon>
        <taxon>Pongo</taxon>
    </lineage>
</organism>
<accession>Q5RCD5</accession>
<reference key="1">
    <citation type="submission" date="2004-11" db="EMBL/GenBank/DDBJ databases">
        <authorList>
            <consortium name="The German cDNA consortium"/>
        </authorList>
    </citation>
    <scope>NUCLEOTIDE SEQUENCE [LARGE SCALE MRNA]</scope>
    <source>
        <tissue>Brain cortex</tissue>
    </source>
</reference>